<proteinExistence type="evidence at protein level"/>
<name>HPT1_ARATH</name>
<reference key="1">
    <citation type="journal article" date="2001" name="Plant Physiol.">
        <title>Isolation and functional analysis of homogentisate phytyltransferase from Synechocystis sp. PCC 6803 and Arabidopsis.</title>
        <authorList>
            <person name="Collakova E."/>
            <person name="DellaPenna D."/>
        </authorList>
    </citation>
    <scope>NUCLEOTIDE SEQUENCE [MRNA]</scope>
    <scope>FUNCTION</scope>
</reference>
<reference key="2">
    <citation type="journal article" date="2002" name="Plant Physiol.">
        <title>Isolation and characterization of homogentisate phytyltransferase genes from Synechocystis sp. PCC 6803 and Arabidopsis.</title>
        <authorList>
            <person name="Savidge B."/>
            <person name="Weiss J.D."/>
            <person name="Wong Y.H.H."/>
            <person name="Lassner M.W."/>
            <person name="Mitsky T.A."/>
            <person name="Shewmaker C.K."/>
            <person name="Post-Beittenmiller D."/>
            <person name="Valentin H.E."/>
        </authorList>
    </citation>
    <scope>NUCLEOTIDE SEQUENCE [MRNA]</scope>
    <scope>FUNCTION</scope>
    <source>
        <strain>cv. No-0</strain>
    </source>
</reference>
<reference key="3">
    <citation type="submission" date="2009-11" db="EMBL/GenBank/DDBJ databases">
        <title>Vitamin E metabolic engineering in potato.</title>
        <authorList>
            <person name="Gururani M.A."/>
            <person name="Upadhyaya C.P."/>
            <person name="Nookaraju A."/>
            <person name="Kim D.H."/>
            <person name="Chul S.C."/>
            <person name="Park S.W."/>
        </authorList>
    </citation>
    <scope>NUCLEOTIDE SEQUENCE [MRNA]</scope>
    <source>
        <strain>cv. Columbia</strain>
    </source>
</reference>
<reference key="4">
    <citation type="journal article" date="1999" name="Nature">
        <title>Sequence and analysis of chromosome 2 of the plant Arabidopsis thaliana.</title>
        <authorList>
            <person name="Lin X."/>
            <person name="Kaul S."/>
            <person name="Rounsley S.D."/>
            <person name="Shea T.P."/>
            <person name="Benito M.-I."/>
            <person name="Town C.D."/>
            <person name="Fujii C.Y."/>
            <person name="Mason T.M."/>
            <person name="Bowman C.L."/>
            <person name="Barnstead M.E."/>
            <person name="Feldblyum T.V."/>
            <person name="Buell C.R."/>
            <person name="Ketchum K.A."/>
            <person name="Lee J.J."/>
            <person name="Ronning C.M."/>
            <person name="Koo H.L."/>
            <person name="Moffat K.S."/>
            <person name="Cronin L.A."/>
            <person name="Shen M."/>
            <person name="Pai G."/>
            <person name="Van Aken S."/>
            <person name="Umayam L."/>
            <person name="Tallon L.J."/>
            <person name="Gill J.E."/>
            <person name="Adams M.D."/>
            <person name="Carrera A.J."/>
            <person name="Creasy T.H."/>
            <person name="Goodman H.M."/>
            <person name="Somerville C.R."/>
            <person name="Copenhaver G.P."/>
            <person name="Preuss D."/>
            <person name="Nierman W.C."/>
            <person name="White O."/>
            <person name="Eisen J.A."/>
            <person name="Salzberg S.L."/>
            <person name="Fraser C.M."/>
            <person name="Venter J.C."/>
        </authorList>
    </citation>
    <scope>NUCLEOTIDE SEQUENCE [LARGE SCALE GENOMIC DNA]</scope>
    <source>
        <strain>cv. Columbia</strain>
    </source>
</reference>
<reference key="5">
    <citation type="journal article" date="2017" name="Plant J.">
        <title>Araport11: a complete reannotation of the Arabidopsis thaliana reference genome.</title>
        <authorList>
            <person name="Cheng C.Y."/>
            <person name="Krishnakumar V."/>
            <person name="Chan A.P."/>
            <person name="Thibaud-Nissen F."/>
            <person name="Schobel S."/>
            <person name="Town C.D."/>
        </authorList>
    </citation>
    <scope>GENOME REANNOTATION</scope>
    <source>
        <strain>cv. Columbia</strain>
    </source>
</reference>
<reference key="6">
    <citation type="journal article" date="2003" name="Science">
        <title>Empirical analysis of transcriptional activity in the Arabidopsis genome.</title>
        <authorList>
            <person name="Yamada K."/>
            <person name="Lim J."/>
            <person name="Dale J.M."/>
            <person name="Chen H."/>
            <person name="Shinn P."/>
            <person name="Palm C.J."/>
            <person name="Southwick A.M."/>
            <person name="Wu H.C."/>
            <person name="Kim C.J."/>
            <person name="Nguyen M."/>
            <person name="Pham P.K."/>
            <person name="Cheuk R.F."/>
            <person name="Karlin-Newmann G."/>
            <person name="Liu S.X."/>
            <person name="Lam B."/>
            <person name="Sakano H."/>
            <person name="Wu T."/>
            <person name="Yu G."/>
            <person name="Miranda M."/>
            <person name="Quach H.L."/>
            <person name="Tripp M."/>
            <person name="Chang C.H."/>
            <person name="Lee J.M."/>
            <person name="Toriumi M.J."/>
            <person name="Chan M.M."/>
            <person name="Tang C.C."/>
            <person name="Onodera C.S."/>
            <person name="Deng J.M."/>
            <person name="Akiyama K."/>
            <person name="Ansari Y."/>
            <person name="Arakawa T."/>
            <person name="Banh J."/>
            <person name="Banno F."/>
            <person name="Bowser L."/>
            <person name="Brooks S.Y."/>
            <person name="Carninci P."/>
            <person name="Chao Q."/>
            <person name="Choy N."/>
            <person name="Enju A."/>
            <person name="Goldsmith A.D."/>
            <person name="Gurjal M."/>
            <person name="Hansen N.F."/>
            <person name="Hayashizaki Y."/>
            <person name="Johnson-Hopson C."/>
            <person name="Hsuan V.W."/>
            <person name="Iida K."/>
            <person name="Karnes M."/>
            <person name="Khan S."/>
            <person name="Koesema E."/>
            <person name="Ishida J."/>
            <person name="Jiang P.X."/>
            <person name="Jones T."/>
            <person name="Kawai J."/>
            <person name="Kamiya A."/>
            <person name="Meyers C."/>
            <person name="Nakajima M."/>
            <person name="Narusaka M."/>
            <person name="Seki M."/>
            <person name="Sakurai T."/>
            <person name="Satou M."/>
            <person name="Tamse R."/>
            <person name="Vaysberg M."/>
            <person name="Wallender E.K."/>
            <person name="Wong C."/>
            <person name="Yamamura Y."/>
            <person name="Yuan S."/>
            <person name="Shinozaki K."/>
            <person name="Davis R.W."/>
            <person name="Theologis A."/>
            <person name="Ecker J.R."/>
        </authorList>
    </citation>
    <scope>NUCLEOTIDE SEQUENCE [LARGE SCALE MRNA]</scope>
    <source>
        <strain>cv. Columbia</strain>
    </source>
</reference>
<reference key="7">
    <citation type="journal article" date="2003" name="Plant Physiol.">
        <title>Homogentisate phytyltransferase activity is limiting for tocopherol biosynthesis in Arabidopsis.</title>
        <authorList>
            <person name="Collakova E."/>
            <person name="DellaPenna D."/>
        </authorList>
    </citation>
    <scope>FUNCTION</scope>
    <scope>DISRUPTION PHENOTYPE</scope>
</reference>
<reference key="8">
    <citation type="journal article" date="2005" name="Plant Cell">
        <title>Vitamin E protects against photoinhibition and photooxidative stress in Arabidopsis thaliana.</title>
        <authorList>
            <person name="Havaux M."/>
            <person name="Eymery F."/>
            <person name="Porfirova S."/>
            <person name="Rey P."/>
            <person name="Doermann P."/>
        </authorList>
    </citation>
    <scope>FUNCTION</scope>
</reference>
<reference key="9">
    <citation type="journal article" date="2006" name="FEBS Lett.">
        <title>Characterization of homogentisate prenyltransferases involved in plastoquinone-9 and tocochromanol biosynthesis.</title>
        <authorList>
            <person name="Sadre R."/>
            <person name="Gruber J."/>
            <person name="Frentzen M."/>
        </authorList>
    </citation>
    <scope>FUNCTION</scope>
    <scope>CATALYTIC ACTIVITY</scope>
</reference>
<reference key="10">
    <citation type="journal article" date="2006" name="Planta">
        <title>Identification and characterization of an Arabidopsis homogentisate phytyltransferase paralog.</title>
        <authorList>
            <person name="Venkatesh T.V."/>
            <person name="Karunanandaa B."/>
            <person name="Free D.L."/>
            <person name="Rottnek J.M."/>
            <person name="Baszis S.R."/>
            <person name="Valentin H.E."/>
        </authorList>
    </citation>
    <scope>NOMENCLATURE</scope>
</reference>
<reference key="11">
    <citation type="journal article" date="2006" name="Plant Cell">
        <title>Tocopherols play a crucial role in low-temperature adaptation and phloem loading in Arabidopsis.</title>
        <authorList>
            <person name="Maeda H."/>
            <person name="Song W."/>
            <person name="Sage T.L."/>
            <person name="DellaPenna D."/>
        </authorList>
    </citation>
    <scope>FUNCTION</scope>
</reference>
<reference key="12">
    <citation type="journal article" date="2008" name="Plant Cell">
        <title>Tocopherols modulate extraplastidic polyunsaturated fatty acid metabolism in Arabidopsis at low temperature.</title>
        <authorList>
            <person name="Maeda H."/>
            <person name="Sage T.L."/>
            <person name="Isaac G."/>
            <person name="Welti R."/>
            <person name="Dellapenna D."/>
        </authorList>
    </citation>
    <scope>FUNCTION</scope>
</reference>
<reference key="13">
    <citation type="journal article" date="2010" name="Plant Biotechnol. J.">
        <title>Seed-specific overexpression of antioxidant genes in Arabidopsis enhances oxidative stress tolerance during germination and early seedling growth.</title>
        <authorList>
            <person name="Xi D.M."/>
            <person name="Liu W.S."/>
            <person name="Yang G.D."/>
            <person name="Wu C.A."/>
            <person name="Zheng C.C."/>
        </authorList>
    </citation>
    <scope>FUNCTION</scope>
</reference>
<reference key="14">
    <citation type="journal article" date="2010" name="Proc. Natl. Acad. Sci. U.S.A.">
        <title>Plastochromanol-8 and tocopherols are essential lipid-soluble antioxidants during seed desiccation and quiescence in Arabidopsis.</title>
        <authorList>
            <person name="Mene-Saffrane L."/>
            <person name="Jones A.D."/>
            <person name="DellaPenna D."/>
        </authorList>
    </citation>
    <scope>FUNCTION</scope>
</reference>
<reference key="15">
    <citation type="journal article" date="2011" name="Plant J.">
        <title>Vitamin E biosynthesis: functional characterization of the monocot homogentisate geranylgeranyl transferase.</title>
        <authorList>
            <person name="Yang W."/>
            <person name="Cahoon R.E."/>
            <person name="Hunter S.C."/>
            <person name="Zhang C."/>
            <person name="Han J."/>
            <person name="Borgschulte T."/>
            <person name="Cahoon E.B."/>
        </authorList>
    </citation>
    <scope>FUNCTION</scope>
    <scope>SUBCELLULAR LOCATION</scope>
</reference>
<keyword id="KW-0150">Chloroplast</keyword>
<keyword id="KW-0472">Membrane</keyword>
<keyword id="KW-0934">Plastid</keyword>
<keyword id="KW-1185">Reference proteome</keyword>
<keyword id="KW-0808">Transferase</keyword>
<keyword id="KW-0809">Transit peptide</keyword>
<keyword id="KW-0812">Transmembrane</keyword>
<keyword id="KW-1133">Transmembrane helix</keyword>
<accession>Q8VWJ1</accession>
<accession>O64625</accession>
<dbReference type="EC" id="2.5.1.115"/>
<dbReference type="EMBL" id="AF324344">
    <property type="protein sequence ID" value="AAL35412.1"/>
    <property type="molecule type" value="mRNA"/>
</dbReference>
<dbReference type="EMBL" id="AY089963">
    <property type="protein sequence ID" value="AAM10489.1"/>
    <property type="molecule type" value="mRNA"/>
</dbReference>
<dbReference type="EMBL" id="GU198365">
    <property type="protein sequence ID" value="ADA57641.1"/>
    <property type="molecule type" value="mRNA"/>
</dbReference>
<dbReference type="EMBL" id="AC003673">
    <property type="protein sequence ID" value="AAC09029.1"/>
    <property type="status" value="ALT_SEQ"/>
    <property type="molecule type" value="Genomic_DNA"/>
</dbReference>
<dbReference type="EMBL" id="CP002685">
    <property type="protein sequence ID" value="AEC06831.1"/>
    <property type="molecule type" value="Genomic_DNA"/>
</dbReference>
<dbReference type="EMBL" id="AY063893">
    <property type="protein sequence ID" value="AAL36249.1"/>
    <property type="molecule type" value="mRNA"/>
</dbReference>
<dbReference type="EMBL" id="AY113993">
    <property type="protein sequence ID" value="AAM45041.1"/>
    <property type="molecule type" value="mRNA"/>
</dbReference>
<dbReference type="PIR" id="T01623">
    <property type="entry name" value="T01623"/>
</dbReference>
<dbReference type="RefSeq" id="NP_849984.1">
    <property type="nucleotide sequence ID" value="NM_179653.4"/>
</dbReference>
<dbReference type="SMR" id="Q8VWJ1"/>
<dbReference type="FunCoup" id="Q8VWJ1">
    <property type="interactions" value="313"/>
</dbReference>
<dbReference type="STRING" id="3702.Q8VWJ1"/>
<dbReference type="SwissLipids" id="SLP:000001495"/>
<dbReference type="iPTMnet" id="Q8VWJ1"/>
<dbReference type="PaxDb" id="3702-AT2G18950.1"/>
<dbReference type="ProteomicsDB" id="228744"/>
<dbReference type="EnsemblPlants" id="AT2G18950.1">
    <property type="protein sequence ID" value="AT2G18950.1"/>
    <property type="gene ID" value="AT2G18950"/>
</dbReference>
<dbReference type="GeneID" id="816412"/>
<dbReference type="Gramene" id="AT2G18950.1">
    <property type="protein sequence ID" value="AT2G18950.1"/>
    <property type="gene ID" value="AT2G18950"/>
</dbReference>
<dbReference type="KEGG" id="ath:AT2G18950"/>
<dbReference type="Araport" id="AT2G18950"/>
<dbReference type="TAIR" id="AT2G18950">
    <property type="gene designation" value="HPT1"/>
</dbReference>
<dbReference type="eggNOG" id="ENOG502R0I3">
    <property type="taxonomic scope" value="Eukaryota"/>
</dbReference>
<dbReference type="HOGENOM" id="CLU_048963_0_0_1"/>
<dbReference type="InParanoid" id="Q8VWJ1"/>
<dbReference type="OMA" id="FYQFIWK"/>
<dbReference type="PhylomeDB" id="Q8VWJ1"/>
<dbReference type="BRENDA" id="2.5.1.115">
    <property type="organism ID" value="399"/>
</dbReference>
<dbReference type="UniPathway" id="UPA00160"/>
<dbReference type="PRO" id="PR:Q8VWJ1"/>
<dbReference type="Proteomes" id="UP000006548">
    <property type="component" value="Chromosome 2"/>
</dbReference>
<dbReference type="ExpressionAtlas" id="Q8VWJ1">
    <property type="expression patterns" value="baseline and differential"/>
</dbReference>
<dbReference type="GO" id="GO:0009507">
    <property type="term" value="C:chloroplast"/>
    <property type="evidence" value="ECO:0000250"/>
    <property type="project" value="TAIR"/>
</dbReference>
<dbReference type="GO" id="GO:0031969">
    <property type="term" value="C:chloroplast membrane"/>
    <property type="evidence" value="ECO:0007669"/>
    <property type="project" value="UniProtKB-SubCell"/>
</dbReference>
<dbReference type="GO" id="GO:0010176">
    <property type="term" value="F:homogentisate phytyltransferase activity"/>
    <property type="evidence" value="ECO:0000314"/>
    <property type="project" value="TAIR"/>
</dbReference>
<dbReference type="GO" id="GO:0071555">
    <property type="term" value="P:cell wall organization"/>
    <property type="evidence" value="ECO:0000315"/>
    <property type="project" value="TAIR"/>
</dbReference>
<dbReference type="GO" id="GO:0009915">
    <property type="term" value="P:phloem sucrose loading"/>
    <property type="evidence" value="ECO:0000315"/>
    <property type="project" value="TAIR"/>
</dbReference>
<dbReference type="GO" id="GO:0031347">
    <property type="term" value="P:regulation of defense response"/>
    <property type="evidence" value="ECO:0000315"/>
    <property type="project" value="TAIR"/>
</dbReference>
<dbReference type="GO" id="GO:0009266">
    <property type="term" value="P:response to temperature stimulus"/>
    <property type="evidence" value="ECO:0000315"/>
    <property type="project" value="TAIR"/>
</dbReference>
<dbReference type="GO" id="GO:0006636">
    <property type="term" value="P:unsaturated fatty acid biosynthetic process"/>
    <property type="evidence" value="ECO:0000315"/>
    <property type="project" value="TAIR"/>
</dbReference>
<dbReference type="GO" id="GO:0010189">
    <property type="term" value="P:vitamin E biosynthetic process"/>
    <property type="evidence" value="ECO:0000315"/>
    <property type="project" value="TAIR"/>
</dbReference>
<dbReference type="CDD" id="cd13960">
    <property type="entry name" value="PT_UbiA_HPT1"/>
    <property type="match status" value="1"/>
</dbReference>
<dbReference type="FunFam" id="1.10.357.140:FF:000011">
    <property type="entry name" value="Homogentisate phytyltransferase 1"/>
    <property type="match status" value="1"/>
</dbReference>
<dbReference type="Gene3D" id="1.10.357.140">
    <property type="entry name" value="UbiA prenyltransferase"/>
    <property type="match status" value="1"/>
</dbReference>
<dbReference type="Gene3D" id="1.20.120.1780">
    <property type="entry name" value="UbiA prenyltransferase"/>
    <property type="match status" value="1"/>
</dbReference>
<dbReference type="InterPro" id="IPR044502">
    <property type="entry name" value="AtHST-like"/>
</dbReference>
<dbReference type="InterPro" id="IPR000537">
    <property type="entry name" value="UbiA_prenyltransferase"/>
</dbReference>
<dbReference type="InterPro" id="IPR044878">
    <property type="entry name" value="UbiA_sf"/>
</dbReference>
<dbReference type="NCBIfam" id="NF009525">
    <property type="entry name" value="PRK12887.1"/>
    <property type="match status" value="1"/>
</dbReference>
<dbReference type="PANTHER" id="PTHR43009:SF6">
    <property type="entry name" value="HOMOGENTISATE PHYTYLTRANSFERASE 1, CHLOROPLASTIC"/>
    <property type="match status" value="1"/>
</dbReference>
<dbReference type="PANTHER" id="PTHR43009">
    <property type="entry name" value="HOMOGENTISATE SOLANESYLTRANSFERASE, CHLOROPLASTIC"/>
    <property type="match status" value="1"/>
</dbReference>
<dbReference type="Pfam" id="PF01040">
    <property type="entry name" value="UbiA"/>
    <property type="match status" value="1"/>
</dbReference>
<evidence type="ECO:0000255" key="1"/>
<evidence type="ECO:0000269" key="2">
    <source>
    </source>
</evidence>
<evidence type="ECO:0000269" key="3">
    <source>
    </source>
</evidence>
<evidence type="ECO:0000269" key="4">
    <source>
    </source>
</evidence>
<evidence type="ECO:0000269" key="5">
    <source>
    </source>
</evidence>
<evidence type="ECO:0000269" key="6">
    <source>
    </source>
</evidence>
<evidence type="ECO:0000269" key="7">
    <source>
    </source>
</evidence>
<evidence type="ECO:0000269" key="8">
    <source>
    </source>
</evidence>
<evidence type="ECO:0000269" key="9">
    <source>
    </source>
</evidence>
<evidence type="ECO:0000269" key="10">
    <source>
    </source>
</evidence>
<evidence type="ECO:0000269" key="11">
    <source>
    </source>
</evidence>
<evidence type="ECO:0000305" key="12"/>
<sequence>MESLLSSSSLVSAAGGFCWKKQNLKLHSLSEIRVLRCDSSKVVAKPKFRNNLVRPDGQGSSLLLYPKHKSRFRVNATAGQPEAFDSNSKQKSFRDSLDAFYRFSRPHTVIGTVLSILSVSFLAVEKVSDISPLLFTGILEAVVAALMMNIYIVGLNQLSDVEIDKVNKPYLPLASGEYSVNTGIAIVASFSIMSFWLGWIVGSWPLFWALFVSFMLGTAYSINLPLLRWKRFALVAAMCILAVRAIIVQIAFYLHIQTHVFGRPILFTRPLIFATAFMSFFSVVIALFKDIPDIEGDKIFGIRSFSVTLGQKRVFWTCVTLLQMAYAVAILVGATSPFIWSKVISVVGHVILATTLWARAKSVDLSSKTEITSCYMFIWKLFYAEYLLLPFLK</sequence>
<gene>
    <name type="primary">HPT1</name>
    <name type="synonym">TPT1</name>
    <name type="synonym">VTE2-1</name>
    <name type="ordered locus">At2g18950</name>
    <name type="ORF">F19F24.15</name>
</gene>
<protein>
    <recommendedName>
        <fullName>Homogentisate phytyltransferase 1, chloroplastic</fullName>
        <shortName>AtHPT1</shortName>
        <ecNumber>2.5.1.115</ecNumber>
    </recommendedName>
    <alternativeName>
        <fullName>Tocopherol polyprenyltransferase 1</fullName>
    </alternativeName>
    <alternativeName>
        <fullName>Vitamin E pathway gene 2-1 protein</fullName>
        <shortName>AtVTE2-1</shortName>
    </alternativeName>
</protein>
<comment type="function">
    <text evidence="2 3 4 5 6 7 8 9 10 11">Involved in the synthesis of tocopherol (vitamin E). Catalyzes the condensation of homogentisate and phytyl diphosphate to form dimethylphytylhydrquinone. Low activity with geranylgeranyl diphosphate as substrate, but no activity with farnesyl diphosphate or solanesyl diphosphate. Tocopherol functions to limit lipid oxidation during seed desiccation, quiescence and germination and early seedling development. Protects thylakoid membrane lipids from photooxidation and is required for low-temperature adaptation.</text>
</comment>
<comment type="catalytic activity">
    <reaction evidence="6">
        <text>phytyl diphosphate + homogentisate + H(+) = 2-methyl-6-phytyl-1,4-benzene-1,4-diol + CO2 + diphosphate</text>
        <dbReference type="Rhea" id="RHEA:37975"/>
        <dbReference type="ChEBI" id="CHEBI:15378"/>
        <dbReference type="ChEBI" id="CHEBI:16169"/>
        <dbReference type="ChEBI" id="CHEBI:16526"/>
        <dbReference type="ChEBI" id="CHEBI:33019"/>
        <dbReference type="ChEBI" id="CHEBI:75434"/>
        <dbReference type="ChEBI" id="CHEBI:75920"/>
        <dbReference type="EC" id="2.5.1.115"/>
    </reaction>
</comment>
<comment type="pathway">
    <text>Cofactor biosynthesis; tocopherol biosynthesis.</text>
</comment>
<comment type="subcellular location">
    <subcellularLocation>
        <location evidence="11">Plastid</location>
        <location evidence="11">Chloroplast membrane</location>
        <topology evidence="1">Multi-pass membrane protein</topology>
    </subcellularLocation>
</comment>
<comment type="disruption phenotype">
    <text evidence="4">Reduced seed longevity, severe seedling growth defects during germination and high levels of lipid hydroperoxides and hydroxy fatty acids.</text>
</comment>
<comment type="miscellaneous">
    <text>Seeds and plants overexpressing HPT1 accumulate increased levels of tocopherol.</text>
</comment>
<comment type="similarity">
    <text evidence="12">Belongs to the UbiA prenyltransferase family.</text>
</comment>
<comment type="sequence caution" evidence="12">
    <conflict type="erroneous gene model prediction">
        <sequence resource="EMBL-CDS" id="AAC09029"/>
    </conflict>
</comment>
<organism>
    <name type="scientific">Arabidopsis thaliana</name>
    <name type="common">Mouse-ear cress</name>
    <dbReference type="NCBI Taxonomy" id="3702"/>
    <lineage>
        <taxon>Eukaryota</taxon>
        <taxon>Viridiplantae</taxon>
        <taxon>Streptophyta</taxon>
        <taxon>Embryophyta</taxon>
        <taxon>Tracheophyta</taxon>
        <taxon>Spermatophyta</taxon>
        <taxon>Magnoliopsida</taxon>
        <taxon>eudicotyledons</taxon>
        <taxon>Gunneridae</taxon>
        <taxon>Pentapetalae</taxon>
        <taxon>rosids</taxon>
        <taxon>malvids</taxon>
        <taxon>Brassicales</taxon>
        <taxon>Brassicaceae</taxon>
        <taxon>Camelineae</taxon>
        <taxon>Arabidopsis</taxon>
    </lineage>
</organism>
<feature type="transit peptide" description="Chloroplast" evidence="1">
    <location>
        <begin position="1"/>
        <end position="36"/>
    </location>
</feature>
<feature type="chain" id="PRO_0000409868" description="Homogentisate phytyltransferase 1, chloroplastic">
    <location>
        <begin position="37"/>
        <end position="393"/>
    </location>
</feature>
<feature type="transmembrane region" description="Helical" evidence="1">
    <location>
        <begin position="108"/>
        <end position="128"/>
    </location>
</feature>
<feature type="transmembrane region" description="Helical" evidence="1">
    <location>
        <begin position="133"/>
        <end position="153"/>
    </location>
</feature>
<feature type="transmembrane region" description="Helical" evidence="1">
    <location>
        <begin position="170"/>
        <end position="190"/>
    </location>
</feature>
<feature type="transmembrane region" description="Helical" evidence="1">
    <location>
        <begin position="205"/>
        <end position="227"/>
    </location>
</feature>
<feature type="transmembrane region" description="Helical" evidence="1">
    <location>
        <begin position="232"/>
        <end position="252"/>
    </location>
</feature>
<feature type="transmembrane region" description="Helical" evidence="1">
    <location>
        <begin position="271"/>
        <end position="291"/>
    </location>
</feature>
<feature type="transmembrane region" description="Helical" evidence="1">
    <location>
        <begin position="314"/>
        <end position="334"/>
    </location>
</feature>
<feature type="transmembrane region" description="Helical" evidence="1">
    <location>
        <begin position="338"/>
        <end position="358"/>
    </location>
</feature>
<feature type="transmembrane region" description="Helical" evidence="1">
    <location>
        <begin position="371"/>
        <end position="391"/>
    </location>
</feature>